<organism>
    <name type="scientific">Arabidopsis thaliana</name>
    <name type="common">Mouse-ear cress</name>
    <dbReference type="NCBI Taxonomy" id="3702"/>
    <lineage>
        <taxon>Eukaryota</taxon>
        <taxon>Viridiplantae</taxon>
        <taxon>Streptophyta</taxon>
        <taxon>Embryophyta</taxon>
        <taxon>Tracheophyta</taxon>
        <taxon>Spermatophyta</taxon>
        <taxon>Magnoliopsida</taxon>
        <taxon>eudicotyledons</taxon>
        <taxon>Gunneridae</taxon>
        <taxon>Pentapetalae</taxon>
        <taxon>rosids</taxon>
        <taxon>malvids</taxon>
        <taxon>Brassicales</taxon>
        <taxon>Brassicaceae</taxon>
        <taxon>Camelineae</taxon>
        <taxon>Arabidopsis</taxon>
    </lineage>
</organism>
<sequence>MASISSLHRWASNQHSRLPRITSISEADQSRPINQVVAFSVPISRRDASIILLSSIPLTSFFVLTPSSSEARERRSRKVIPLEEYSTGPEGLKFYDIEEGKGPVATEGSTAQVHFDCRYRSITAISTRESKLLAGNRSIAQPYEFKVGSTPGKERKREFVDNPNGLFSAQAAPKPPPAMYFITEGMKVGGKRTVIVPPEAGYGQKGMNEIPPGATFELNIELLRVTPPPEEK</sequence>
<feature type="transit peptide" description="Chloroplast" evidence="2">
    <location>
        <begin position="1"/>
        <end status="unknown"/>
    </location>
</feature>
<feature type="transit peptide" description="Thylakoid" evidence="4">
    <location>
        <begin status="unknown"/>
        <end position="71"/>
    </location>
</feature>
<feature type="chain" id="PRO_0000025524" description="Peptidyl-prolyl cis-trans isomerase FKBP18, chloroplastic">
    <location>
        <begin position="72"/>
        <end position="232"/>
    </location>
</feature>
<feature type="domain" description="PPIase FKBP-type" evidence="3">
    <location>
        <begin position="108"/>
        <end position="226"/>
    </location>
</feature>
<reference key="1">
    <citation type="journal article" date="2000" name="Nature">
        <title>Sequence and analysis of chromosome 1 of the plant Arabidopsis thaliana.</title>
        <authorList>
            <person name="Theologis A."/>
            <person name="Ecker J.R."/>
            <person name="Palm C.J."/>
            <person name="Federspiel N.A."/>
            <person name="Kaul S."/>
            <person name="White O."/>
            <person name="Alonso J."/>
            <person name="Altafi H."/>
            <person name="Araujo R."/>
            <person name="Bowman C.L."/>
            <person name="Brooks S.Y."/>
            <person name="Buehler E."/>
            <person name="Chan A."/>
            <person name="Chao Q."/>
            <person name="Chen H."/>
            <person name="Cheuk R.F."/>
            <person name="Chin C.W."/>
            <person name="Chung M.K."/>
            <person name="Conn L."/>
            <person name="Conway A.B."/>
            <person name="Conway A.R."/>
            <person name="Creasy T.H."/>
            <person name="Dewar K."/>
            <person name="Dunn P."/>
            <person name="Etgu P."/>
            <person name="Feldblyum T.V."/>
            <person name="Feng J.-D."/>
            <person name="Fong B."/>
            <person name="Fujii C.Y."/>
            <person name="Gill J.E."/>
            <person name="Goldsmith A.D."/>
            <person name="Haas B."/>
            <person name="Hansen N.F."/>
            <person name="Hughes B."/>
            <person name="Huizar L."/>
            <person name="Hunter J.L."/>
            <person name="Jenkins J."/>
            <person name="Johnson-Hopson C."/>
            <person name="Khan S."/>
            <person name="Khaykin E."/>
            <person name="Kim C.J."/>
            <person name="Koo H.L."/>
            <person name="Kremenetskaia I."/>
            <person name="Kurtz D.B."/>
            <person name="Kwan A."/>
            <person name="Lam B."/>
            <person name="Langin-Hooper S."/>
            <person name="Lee A."/>
            <person name="Lee J.M."/>
            <person name="Lenz C.A."/>
            <person name="Li J.H."/>
            <person name="Li Y.-P."/>
            <person name="Lin X."/>
            <person name="Liu S.X."/>
            <person name="Liu Z.A."/>
            <person name="Luros J.S."/>
            <person name="Maiti R."/>
            <person name="Marziali A."/>
            <person name="Militscher J."/>
            <person name="Miranda M."/>
            <person name="Nguyen M."/>
            <person name="Nierman W.C."/>
            <person name="Osborne B.I."/>
            <person name="Pai G."/>
            <person name="Peterson J."/>
            <person name="Pham P.K."/>
            <person name="Rizzo M."/>
            <person name="Rooney T."/>
            <person name="Rowley D."/>
            <person name="Sakano H."/>
            <person name="Salzberg S.L."/>
            <person name="Schwartz J.R."/>
            <person name="Shinn P."/>
            <person name="Southwick A.M."/>
            <person name="Sun H."/>
            <person name="Tallon L.J."/>
            <person name="Tambunga G."/>
            <person name="Toriumi M.J."/>
            <person name="Town C.D."/>
            <person name="Utterback T."/>
            <person name="Van Aken S."/>
            <person name="Vaysberg M."/>
            <person name="Vysotskaia V.S."/>
            <person name="Walker M."/>
            <person name="Wu D."/>
            <person name="Yu G."/>
            <person name="Fraser C.M."/>
            <person name="Venter J.C."/>
            <person name="Davis R.W."/>
        </authorList>
    </citation>
    <scope>NUCLEOTIDE SEQUENCE [LARGE SCALE GENOMIC DNA]</scope>
    <source>
        <strain>cv. Columbia</strain>
    </source>
</reference>
<reference key="2">
    <citation type="journal article" date="2017" name="Plant J.">
        <title>Araport11: a complete reannotation of the Arabidopsis thaliana reference genome.</title>
        <authorList>
            <person name="Cheng C.Y."/>
            <person name="Krishnakumar V."/>
            <person name="Chan A.P."/>
            <person name="Thibaud-Nissen F."/>
            <person name="Schobel S."/>
            <person name="Town C.D."/>
        </authorList>
    </citation>
    <scope>GENOME REANNOTATION</scope>
    <source>
        <strain>cv. Columbia</strain>
    </source>
</reference>
<reference key="3">
    <citation type="journal article" date="2002" name="Science">
        <title>Functional annotation of a full-length Arabidopsis cDNA collection.</title>
        <authorList>
            <person name="Seki M."/>
            <person name="Narusaka M."/>
            <person name="Kamiya A."/>
            <person name="Ishida J."/>
            <person name="Satou M."/>
            <person name="Sakurai T."/>
            <person name="Nakajima M."/>
            <person name="Enju A."/>
            <person name="Akiyama K."/>
            <person name="Oono Y."/>
            <person name="Muramatsu M."/>
            <person name="Hayashizaki Y."/>
            <person name="Kawai J."/>
            <person name="Carninci P."/>
            <person name="Itoh M."/>
            <person name="Ishii Y."/>
            <person name="Arakawa T."/>
            <person name="Shibata K."/>
            <person name="Shinagawa A."/>
            <person name="Shinozaki K."/>
        </authorList>
    </citation>
    <scope>NUCLEOTIDE SEQUENCE [LARGE SCALE MRNA]</scope>
    <source>
        <strain>cv. Columbia</strain>
    </source>
</reference>
<reference key="4">
    <citation type="journal article" date="2003" name="Science">
        <title>Empirical analysis of transcriptional activity in the Arabidopsis genome.</title>
        <authorList>
            <person name="Yamada K."/>
            <person name="Lim J."/>
            <person name="Dale J.M."/>
            <person name="Chen H."/>
            <person name="Shinn P."/>
            <person name="Palm C.J."/>
            <person name="Southwick A.M."/>
            <person name="Wu H.C."/>
            <person name="Kim C.J."/>
            <person name="Nguyen M."/>
            <person name="Pham P.K."/>
            <person name="Cheuk R.F."/>
            <person name="Karlin-Newmann G."/>
            <person name="Liu S.X."/>
            <person name="Lam B."/>
            <person name="Sakano H."/>
            <person name="Wu T."/>
            <person name="Yu G."/>
            <person name="Miranda M."/>
            <person name="Quach H.L."/>
            <person name="Tripp M."/>
            <person name="Chang C.H."/>
            <person name="Lee J.M."/>
            <person name="Toriumi M.J."/>
            <person name="Chan M.M."/>
            <person name="Tang C.C."/>
            <person name="Onodera C.S."/>
            <person name="Deng J.M."/>
            <person name="Akiyama K."/>
            <person name="Ansari Y."/>
            <person name="Arakawa T."/>
            <person name="Banh J."/>
            <person name="Banno F."/>
            <person name="Bowser L."/>
            <person name="Brooks S.Y."/>
            <person name="Carninci P."/>
            <person name="Chao Q."/>
            <person name="Choy N."/>
            <person name="Enju A."/>
            <person name="Goldsmith A.D."/>
            <person name="Gurjal M."/>
            <person name="Hansen N.F."/>
            <person name="Hayashizaki Y."/>
            <person name="Johnson-Hopson C."/>
            <person name="Hsuan V.W."/>
            <person name="Iida K."/>
            <person name="Karnes M."/>
            <person name="Khan S."/>
            <person name="Koesema E."/>
            <person name="Ishida J."/>
            <person name="Jiang P.X."/>
            <person name="Jones T."/>
            <person name="Kawai J."/>
            <person name="Kamiya A."/>
            <person name="Meyers C."/>
            <person name="Nakajima M."/>
            <person name="Narusaka M."/>
            <person name="Seki M."/>
            <person name="Sakurai T."/>
            <person name="Satou M."/>
            <person name="Tamse R."/>
            <person name="Vaysberg M."/>
            <person name="Wallender E.K."/>
            <person name="Wong C."/>
            <person name="Yamamura Y."/>
            <person name="Yuan S."/>
            <person name="Shinozaki K."/>
            <person name="Davis R.W."/>
            <person name="Theologis A."/>
            <person name="Ecker J.R."/>
        </authorList>
    </citation>
    <scope>NUCLEOTIDE SEQUENCE [LARGE SCALE MRNA]</scope>
    <source>
        <strain>cv. Columbia</strain>
    </source>
</reference>
<reference key="5">
    <citation type="journal article" date="2002" name="J. Biol. Chem.">
        <title>Proteome map of the chloroplast lumen of Arabidopsis thaliana.</title>
        <authorList>
            <person name="Schubert M."/>
            <person name="Petersson U.A."/>
            <person name="Haas B.J."/>
            <person name="Funk C."/>
            <person name="Schroeder W.P."/>
            <person name="Kieselbach T."/>
        </authorList>
    </citation>
    <scope>PROTEIN SEQUENCE OF 72-81</scope>
    <scope>SUBCELLULAR LOCATION</scope>
</reference>
<reference key="6">
    <citation type="journal article" date="2004" name="Plant Physiol.">
        <title>Immunophilins and parvulins. Superfamily of peptidyl prolyl isomerases in Arabidopsis.</title>
        <authorList>
            <person name="He Z."/>
            <person name="Li L."/>
            <person name="Luan S."/>
        </authorList>
    </citation>
    <scope>GENE FAMILY</scope>
    <scope>NOMENCLATURE</scope>
    <source>
        <strain>cv. Columbia</strain>
    </source>
</reference>
<keyword id="KW-0150">Chloroplast</keyword>
<keyword id="KW-0903">Direct protein sequencing</keyword>
<keyword id="KW-0413">Isomerase</keyword>
<keyword id="KW-0934">Plastid</keyword>
<keyword id="KW-1185">Reference proteome</keyword>
<keyword id="KW-0697">Rotamase</keyword>
<keyword id="KW-0793">Thylakoid</keyword>
<keyword id="KW-0809">Transit peptide</keyword>
<evidence type="ECO:0000250" key="1"/>
<evidence type="ECO:0000255" key="2"/>
<evidence type="ECO:0000255" key="3">
    <source>
        <dbReference type="PROSITE-ProRule" id="PRU00277"/>
    </source>
</evidence>
<evidence type="ECO:0000269" key="4">
    <source>
    </source>
</evidence>
<evidence type="ECO:0000305" key="5"/>
<protein>
    <recommendedName>
        <fullName>Peptidyl-prolyl cis-trans isomerase FKBP18, chloroplastic</fullName>
        <shortName>PPIase FKBP18</shortName>
        <ecNumber>5.2.1.8</ecNumber>
    </recommendedName>
    <alternativeName>
        <fullName>FK506-binding protein 18</fullName>
        <shortName>AtFKBP18</shortName>
    </alternativeName>
    <alternativeName>
        <fullName>Immunophilin FKBP18</fullName>
    </alternativeName>
    <alternativeName>
        <fullName>Rotamase</fullName>
    </alternativeName>
</protein>
<dbReference type="EC" id="5.2.1.8"/>
<dbReference type="EMBL" id="AC069251">
    <property type="protein sequence ID" value="AAF80622.1"/>
    <property type="status" value="ALT_SEQ"/>
    <property type="molecule type" value="Genomic_DNA"/>
</dbReference>
<dbReference type="EMBL" id="CP002684">
    <property type="protein sequence ID" value="AEE30026.1"/>
    <property type="molecule type" value="Genomic_DNA"/>
</dbReference>
<dbReference type="EMBL" id="AK117407">
    <property type="protein sequence ID" value="BAC42074.1"/>
    <property type="molecule type" value="mRNA"/>
</dbReference>
<dbReference type="EMBL" id="BT005089">
    <property type="protein sequence ID" value="AAO50622.1"/>
    <property type="molecule type" value="mRNA"/>
</dbReference>
<dbReference type="PIR" id="E86340">
    <property type="entry name" value="E86340"/>
</dbReference>
<dbReference type="RefSeq" id="NP_173504.1">
    <property type="nucleotide sequence ID" value="NM_101933.4"/>
</dbReference>
<dbReference type="SMR" id="Q9LM71"/>
<dbReference type="BioGRID" id="23911">
    <property type="interactions" value="1"/>
</dbReference>
<dbReference type="FunCoup" id="Q9LM71">
    <property type="interactions" value="1275"/>
</dbReference>
<dbReference type="STRING" id="3702.Q9LM71"/>
<dbReference type="GlyGen" id="Q9LM71">
    <property type="glycosylation" value="1 site"/>
</dbReference>
<dbReference type="PaxDb" id="3702-AT1G20810.1"/>
<dbReference type="ProteomicsDB" id="230621"/>
<dbReference type="EnsemblPlants" id="AT1G20810.1">
    <property type="protein sequence ID" value="AT1G20810.1"/>
    <property type="gene ID" value="AT1G20810"/>
</dbReference>
<dbReference type="GeneID" id="838672"/>
<dbReference type="Gramene" id="AT1G20810.1">
    <property type="protein sequence ID" value="AT1G20810.1"/>
    <property type="gene ID" value="AT1G20810"/>
</dbReference>
<dbReference type="KEGG" id="ath:AT1G20810"/>
<dbReference type="Araport" id="AT1G20810"/>
<dbReference type="TAIR" id="AT1G20810"/>
<dbReference type="eggNOG" id="KOG0552">
    <property type="taxonomic scope" value="Eukaryota"/>
</dbReference>
<dbReference type="HOGENOM" id="CLU_089785_1_0_1"/>
<dbReference type="InParanoid" id="Q9LM71"/>
<dbReference type="OMA" id="MALACHD"/>
<dbReference type="OrthoDB" id="1902587at2759"/>
<dbReference type="PhylomeDB" id="Q9LM71"/>
<dbReference type="PRO" id="PR:Q9LM71"/>
<dbReference type="Proteomes" id="UP000006548">
    <property type="component" value="Chromosome 1"/>
</dbReference>
<dbReference type="ExpressionAtlas" id="Q9LM71">
    <property type="expression patterns" value="baseline and differential"/>
</dbReference>
<dbReference type="GO" id="GO:0009507">
    <property type="term" value="C:chloroplast"/>
    <property type="evidence" value="ECO:0007005"/>
    <property type="project" value="TAIR"/>
</dbReference>
<dbReference type="GO" id="GO:0009543">
    <property type="term" value="C:chloroplast thylakoid lumen"/>
    <property type="evidence" value="ECO:0007669"/>
    <property type="project" value="UniProtKB-SubCell"/>
</dbReference>
<dbReference type="GO" id="GO:0005634">
    <property type="term" value="C:nucleus"/>
    <property type="evidence" value="ECO:0007005"/>
    <property type="project" value="TAIR"/>
</dbReference>
<dbReference type="GO" id="GO:0031977">
    <property type="term" value="C:thylakoid lumen"/>
    <property type="evidence" value="ECO:0007005"/>
    <property type="project" value="TAIR"/>
</dbReference>
<dbReference type="GO" id="GO:0003755">
    <property type="term" value="F:peptidyl-prolyl cis-trans isomerase activity"/>
    <property type="evidence" value="ECO:0007669"/>
    <property type="project" value="UniProtKB-KW"/>
</dbReference>
<dbReference type="FunFam" id="3.10.50.40:FF:000036">
    <property type="entry name" value="Peptidylprolyl isomerase"/>
    <property type="match status" value="1"/>
</dbReference>
<dbReference type="Gene3D" id="3.10.50.40">
    <property type="match status" value="1"/>
</dbReference>
<dbReference type="InterPro" id="IPR044180">
    <property type="entry name" value="FKBP18-like"/>
</dbReference>
<dbReference type="InterPro" id="IPR046357">
    <property type="entry name" value="PPIase_dom_sf"/>
</dbReference>
<dbReference type="InterPro" id="IPR001179">
    <property type="entry name" value="PPIase_FKBP_dom"/>
</dbReference>
<dbReference type="PANTHER" id="PTHR47862">
    <property type="entry name" value="PEPTIDYL-PROLYL CIS-TRANS ISOMERASE FKBP18, CHLOROPLASTIC"/>
    <property type="match status" value="1"/>
</dbReference>
<dbReference type="PANTHER" id="PTHR47862:SF1">
    <property type="entry name" value="PEPTIDYL-PROLYL CIS-TRANS ISOMERASE FKBP18, CHLOROPLASTIC"/>
    <property type="match status" value="1"/>
</dbReference>
<dbReference type="Pfam" id="PF00254">
    <property type="entry name" value="FKBP_C"/>
    <property type="match status" value="1"/>
</dbReference>
<dbReference type="SUPFAM" id="SSF54534">
    <property type="entry name" value="FKBP-like"/>
    <property type="match status" value="1"/>
</dbReference>
<dbReference type="PROSITE" id="PS50059">
    <property type="entry name" value="FKBP_PPIASE"/>
    <property type="match status" value="1"/>
</dbReference>
<accession>Q9LM71</accession>
<accession>Q541Y2</accession>
<proteinExistence type="evidence at protein level"/>
<comment type="function">
    <text evidence="1">PPIases accelerate the folding of proteins. It catalyzes the cis-trans isomerization of proline imidic peptide bonds in oligopeptides (By similarity).</text>
</comment>
<comment type="catalytic activity">
    <reaction>
        <text>[protein]-peptidylproline (omega=180) = [protein]-peptidylproline (omega=0)</text>
        <dbReference type="Rhea" id="RHEA:16237"/>
        <dbReference type="Rhea" id="RHEA-COMP:10747"/>
        <dbReference type="Rhea" id="RHEA-COMP:10748"/>
        <dbReference type="ChEBI" id="CHEBI:83833"/>
        <dbReference type="ChEBI" id="CHEBI:83834"/>
        <dbReference type="EC" id="5.2.1.8"/>
    </reaction>
</comment>
<comment type="subcellular location">
    <subcellularLocation>
        <location evidence="4">Plastid</location>
        <location evidence="4">Chloroplast thylakoid lumen</location>
    </subcellularLocation>
</comment>
<comment type="similarity">
    <text evidence="5">Belongs to the FKBP-type PPIase family.</text>
</comment>
<comment type="sequence caution" evidence="5">
    <conflict type="erroneous gene model prediction">
        <sequence resource="EMBL-CDS" id="AAF80622"/>
    </conflict>
</comment>
<name>FKB18_ARATH</name>
<gene>
    <name type="primary">FKBP18</name>
    <name type="ordered locus">At1g20810</name>
    <name type="ORF">F2D10.32</name>
</gene>